<accession>P9WP12</accession>
<accession>L0T6C5</accession>
<accession>P64787</accession>
<accession>Q11057</accession>
<gene>
    <name type="ordered locus">MT1299</name>
</gene>
<organism>
    <name type="scientific">Mycobacterium tuberculosis (strain CDC 1551 / Oshkosh)</name>
    <dbReference type="NCBI Taxonomy" id="83331"/>
    <lineage>
        <taxon>Bacteria</taxon>
        <taxon>Bacillati</taxon>
        <taxon>Actinomycetota</taxon>
        <taxon>Actinomycetes</taxon>
        <taxon>Mycobacteriales</taxon>
        <taxon>Mycobacteriaceae</taxon>
        <taxon>Mycobacterium</taxon>
        <taxon>Mycobacterium tuberculosis complex</taxon>
    </lineage>
</organism>
<evidence type="ECO:0000250" key="1">
    <source>
        <dbReference type="UniProtKB" id="P9WP13"/>
    </source>
</evidence>
<evidence type="ECO:0000250" key="2">
    <source>
        <dbReference type="UniProtKB" id="P9WP15"/>
    </source>
</evidence>
<evidence type="ECO:0000305" key="3"/>
<name>FQR61_MYCTO</name>
<reference key="1">
    <citation type="journal article" date="2002" name="J. Bacteriol.">
        <title>Whole-genome comparison of Mycobacterium tuberculosis clinical and laboratory strains.</title>
        <authorList>
            <person name="Fleischmann R.D."/>
            <person name="Alland D."/>
            <person name="Eisen J.A."/>
            <person name="Carpenter L."/>
            <person name="White O."/>
            <person name="Peterson J.D."/>
            <person name="DeBoy R.T."/>
            <person name="Dodson R.J."/>
            <person name="Gwinn M.L."/>
            <person name="Haft D.H."/>
            <person name="Hickey E.K."/>
            <person name="Kolonay J.F."/>
            <person name="Nelson W.C."/>
            <person name="Umayam L.A."/>
            <person name="Ermolaeva M.D."/>
            <person name="Salzberg S.L."/>
            <person name="Delcher A."/>
            <person name="Utterback T.R."/>
            <person name="Weidman J.F."/>
            <person name="Khouri H.M."/>
            <person name="Gill J."/>
            <person name="Mikula A."/>
            <person name="Bishai W."/>
            <person name="Jacobs W.R. Jr."/>
            <person name="Venter J.C."/>
            <person name="Fraser C.M."/>
        </authorList>
    </citation>
    <scope>NUCLEOTIDE SEQUENCE [LARGE SCALE GENOMIC DNA]</scope>
    <source>
        <strain>CDC 1551 / Oshkosh</strain>
    </source>
</reference>
<sequence length="149" mass="16756">MDISRWLERHVGVQLLRLHDAIYRGTNGRIGHRIPGAPPSLLLHTTGAKTSQPRTTSLTYARDGDAYLIVASKGGDPRSPGWYHNLKANPDVEINVGPKRFGVTAKPVQPHDPDYARLWQIVNENNANRYTNYQSRTSRPIPVVVLTRR</sequence>
<comment type="function">
    <text evidence="1">Involved in a F420-dependent anti-oxidant mechanism that protects M.tuberculosis against oxidative stress and bactericidal agents. Catalyzes the F420H(2)-dependent two-electron reduction of quinones to dihydroquinones, thereby preventing the formation of cytotoxic semiquinones obtained by the one-electron reduction pathway. In vitro, catalyzes the reduction of menadione to menadiol; since menaquinone is the sole quinone electron carrier in the respiratory chain in M.tuberculosis, the physiological electron acceptor for Fqr-mediated F420H(2) oxidation is therefore likely to be the endogenous menaquinone found in the membrane fraction of M.tuberculosis.</text>
</comment>
<comment type="catalytic activity">
    <reaction evidence="1">
        <text>oxidized coenzyme F420-(gamma-L-Glu)(n) + a quinol + H(+) = reduced coenzyme F420-(gamma-L-Glu)(n) + a quinone</text>
        <dbReference type="Rhea" id="RHEA:39663"/>
        <dbReference type="Rhea" id="RHEA-COMP:12939"/>
        <dbReference type="Rhea" id="RHEA-COMP:14378"/>
        <dbReference type="ChEBI" id="CHEBI:15378"/>
        <dbReference type="ChEBI" id="CHEBI:24646"/>
        <dbReference type="ChEBI" id="CHEBI:132124"/>
        <dbReference type="ChEBI" id="CHEBI:133980"/>
        <dbReference type="ChEBI" id="CHEBI:139511"/>
    </reaction>
</comment>
<comment type="subcellular location">
    <subcellularLocation>
        <location evidence="2">Cell membrane</location>
        <topology evidence="2">Peripheral membrane protein</topology>
    </subcellularLocation>
</comment>
<comment type="similarity">
    <text evidence="3">Belongs to the F420H(2)-dependent quinone reductase family.</text>
</comment>
<dbReference type="EC" id="1.1.98.-" evidence="1"/>
<dbReference type="EMBL" id="AE000516">
    <property type="protein sequence ID" value="AAK45558.1"/>
    <property type="molecule type" value="Genomic_DNA"/>
</dbReference>
<dbReference type="PIR" id="E70753">
    <property type="entry name" value="E70753"/>
</dbReference>
<dbReference type="RefSeq" id="WP_003406364.1">
    <property type="nucleotide sequence ID" value="NZ_KK341227.1"/>
</dbReference>
<dbReference type="SMR" id="P9WP12"/>
<dbReference type="KEGG" id="mtc:MT1299"/>
<dbReference type="PATRIC" id="fig|83331.31.peg.1403"/>
<dbReference type="HOGENOM" id="CLU_114921_2_0_11"/>
<dbReference type="Proteomes" id="UP000001020">
    <property type="component" value="Chromosome"/>
</dbReference>
<dbReference type="GO" id="GO:0005886">
    <property type="term" value="C:plasma membrane"/>
    <property type="evidence" value="ECO:0007669"/>
    <property type="project" value="UniProtKB-SubCell"/>
</dbReference>
<dbReference type="GO" id="GO:0070967">
    <property type="term" value="F:coenzyme F420 binding"/>
    <property type="evidence" value="ECO:0007669"/>
    <property type="project" value="TreeGrafter"/>
</dbReference>
<dbReference type="GO" id="GO:0016491">
    <property type="term" value="F:oxidoreductase activity"/>
    <property type="evidence" value="ECO:0007669"/>
    <property type="project" value="UniProtKB-KW"/>
</dbReference>
<dbReference type="Gene3D" id="2.30.110.10">
    <property type="entry name" value="Electron Transport, Fmn-binding Protein, Chain A"/>
    <property type="match status" value="1"/>
</dbReference>
<dbReference type="InterPro" id="IPR004378">
    <property type="entry name" value="F420H2_quin_Rdtase"/>
</dbReference>
<dbReference type="InterPro" id="IPR012349">
    <property type="entry name" value="Split_barrel_FMN-bd"/>
</dbReference>
<dbReference type="NCBIfam" id="TIGR00026">
    <property type="entry name" value="hi_GC_TIGR00026"/>
    <property type="match status" value="1"/>
</dbReference>
<dbReference type="PANTHER" id="PTHR39428">
    <property type="entry name" value="F420H(2)-DEPENDENT QUINONE REDUCTASE RV1261C"/>
    <property type="match status" value="1"/>
</dbReference>
<dbReference type="PANTHER" id="PTHR39428:SF1">
    <property type="entry name" value="F420H(2)-DEPENDENT QUINONE REDUCTASE RV1261C"/>
    <property type="match status" value="1"/>
</dbReference>
<dbReference type="Pfam" id="PF04075">
    <property type="entry name" value="F420H2_quin_red"/>
    <property type="match status" value="1"/>
</dbReference>
<protein>
    <recommendedName>
        <fullName evidence="1">F420H(2)-dependent quinone reductase MT1299</fullName>
        <shortName evidence="1">Fqr</shortName>
        <ecNumber evidence="1">1.1.98.-</ecNumber>
    </recommendedName>
</protein>
<feature type="chain" id="PRO_0000427032" description="F420H(2)-dependent quinone reductase MT1299">
    <location>
        <begin position="1"/>
        <end position="149"/>
    </location>
</feature>
<feature type="binding site" evidence="2">
    <location>
        <begin position="48"/>
        <end position="50"/>
    </location>
    <ligand>
        <name>coenzyme F420-(gamma-Glu)n</name>
        <dbReference type="ChEBI" id="CHEBI:133980"/>
    </ligand>
</feature>
<feature type="binding site" evidence="2">
    <location>
        <begin position="54"/>
        <end position="59"/>
    </location>
    <ligand>
        <name>coenzyme F420-(gamma-Glu)n</name>
        <dbReference type="ChEBI" id="CHEBI:133980"/>
    </ligand>
</feature>
<feature type="binding site" evidence="2">
    <location>
        <begin position="70"/>
        <end position="73"/>
    </location>
    <ligand>
        <name>coenzyme F420-(gamma-Glu)n</name>
        <dbReference type="ChEBI" id="CHEBI:133980"/>
    </ligand>
</feature>
<feature type="binding site" evidence="2">
    <location>
        <begin position="81"/>
        <end position="85"/>
    </location>
    <ligand>
        <name>coenzyme F420-(gamma-Glu)n</name>
        <dbReference type="ChEBI" id="CHEBI:133980"/>
    </ligand>
</feature>
<feature type="binding site" evidence="2">
    <location>
        <position position="130"/>
    </location>
    <ligand>
        <name>coenzyme F420-(gamma-Glu)n</name>
        <dbReference type="ChEBI" id="CHEBI:133980"/>
    </ligand>
</feature>
<proteinExistence type="inferred from homology"/>
<keyword id="KW-1003">Cell membrane</keyword>
<keyword id="KW-0472">Membrane</keyword>
<keyword id="KW-0560">Oxidoreductase</keyword>
<keyword id="KW-1185">Reference proteome</keyword>